<sequence>MKTVFVLNGPNLNALGKREPGIYGGKTLAAIADDCKQAGASLGLGIDFRQSNHEGDLVDWIQEAGDKAAGIVINPGAYSHTSIAIHDAIRSIAPLPVAEVHLSNIHARESFRHVSMVAPVAVGMICGFGPLGYTLALQALAARL</sequence>
<dbReference type="EC" id="4.2.1.10" evidence="1"/>
<dbReference type="EMBL" id="BA000012">
    <property type="protein sequence ID" value="BAB47840.1"/>
    <property type="molecule type" value="Genomic_DNA"/>
</dbReference>
<dbReference type="RefSeq" id="WP_010909210.1">
    <property type="nucleotide sequence ID" value="NC_002678.2"/>
</dbReference>
<dbReference type="SMR" id="Q98NC1"/>
<dbReference type="KEGG" id="mlo:mll0207"/>
<dbReference type="PATRIC" id="fig|266835.9.peg.160"/>
<dbReference type="eggNOG" id="COG0757">
    <property type="taxonomic scope" value="Bacteria"/>
</dbReference>
<dbReference type="HOGENOM" id="CLU_090968_2_0_5"/>
<dbReference type="UniPathway" id="UPA00053">
    <property type="reaction ID" value="UER00086"/>
</dbReference>
<dbReference type="Proteomes" id="UP000000552">
    <property type="component" value="Chromosome"/>
</dbReference>
<dbReference type="GO" id="GO:0003855">
    <property type="term" value="F:3-dehydroquinate dehydratase activity"/>
    <property type="evidence" value="ECO:0007669"/>
    <property type="project" value="UniProtKB-UniRule"/>
</dbReference>
<dbReference type="GO" id="GO:0008652">
    <property type="term" value="P:amino acid biosynthetic process"/>
    <property type="evidence" value="ECO:0007669"/>
    <property type="project" value="UniProtKB-KW"/>
</dbReference>
<dbReference type="GO" id="GO:0009073">
    <property type="term" value="P:aromatic amino acid family biosynthetic process"/>
    <property type="evidence" value="ECO:0007669"/>
    <property type="project" value="UniProtKB-KW"/>
</dbReference>
<dbReference type="GO" id="GO:0009423">
    <property type="term" value="P:chorismate biosynthetic process"/>
    <property type="evidence" value="ECO:0007669"/>
    <property type="project" value="UniProtKB-UniRule"/>
</dbReference>
<dbReference type="GO" id="GO:0019631">
    <property type="term" value="P:quinate catabolic process"/>
    <property type="evidence" value="ECO:0007669"/>
    <property type="project" value="TreeGrafter"/>
</dbReference>
<dbReference type="CDD" id="cd00466">
    <property type="entry name" value="DHQase_II"/>
    <property type="match status" value="1"/>
</dbReference>
<dbReference type="Gene3D" id="3.40.50.9100">
    <property type="entry name" value="Dehydroquinase, class II"/>
    <property type="match status" value="1"/>
</dbReference>
<dbReference type="HAMAP" id="MF_00169">
    <property type="entry name" value="AroQ"/>
    <property type="match status" value="1"/>
</dbReference>
<dbReference type="InterPro" id="IPR001874">
    <property type="entry name" value="DHquinase_II"/>
</dbReference>
<dbReference type="InterPro" id="IPR018509">
    <property type="entry name" value="DHquinase_II_CS"/>
</dbReference>
<dbReference type="InterPro" id="IPR036441">
    <property type="entry name" value="DHquinase_II_sf"/>
</dbReference>
<dbReference type="NCBIfam" id="TIGR01088">
    <property type="entry name" value="aroQ"/>
    <property type="match status" value="1"/>
</dbReference>
<dbReference type="NCBIfam" id="NF003805">
    <property type="entry name" value="PRK05395.1-2"/>
    <property type="match status" value="1"/>
</dbReference>
<dbReference type="NCBIfam" id="NF003806">
    <property type="entry name" value="PRK05395.1-3"/>
    <property type="match status" value="1"/>
</dbReference>
<dbReference type="NCBIfam" id="NF003807">
    <property type="entry name" value="PRK05395.1-4"/>
    <property type="match status" value="1"/>
</dbReference>
<dbReference type="PANTHER" id="PTHR21272">
    <property type="entry name" value="CATABOLIC 3-DEHYDROQUINASE"/>
    <property type="match status" value="1"/>
</dbReference>
<dbReference type="PANTHER" id="PTHR21272:SF3">
    <property type="entry name" value="CATABOLIC 3-DEHYDROQUINASE"/>
    <property type="match status" value="1"/>
</dbReference>
<dbReference type="Pfam" id="PF01220">
    <property type="entry name" value="DHquinase_II"/>
    <property type="match status" value="1"/>
</dbReference>
<dbReference type="PIRSF" id="PIRSF001399">
    <property type="entry name" value="DHquinase_II"/>
    <property type="match status" value="1"/>
</dbReference>
<dbReference type="SUPFAM" id="SSF52304">
    <property type="entry name" value="Type II 3-dehydroquinate dehydratase"/>
    <property type="match status" value="1"/>
</dbReference>
<dbReference type="PROSITE" id="PS01029">
    <property type="entry name" value="DEHYDROQUINASE_II"/>
    <property type="match status" value="1"/>
</dbReference>
<organism>
    <name type="scientific">Mesorhizobium japonicum (strain LMG 29417 / CECT 9101 / MAFF 303099)</name>
    <name type="common">Mesorhizobium loti (strain MAFF 303099)</name>
    <dbReference type="NCBI Taxonomy" id="266835"/>
    <lineage>
        <taxon>Bacteria</taxon>
        <taxon>Pseudomonadati</taxon>
        <taxon>Pseudomonadota</taxon>
        <taxon>Alphaproteobacteria</taxon>
        <taxon>Hyphomicrobiales</taxon>
        <taxon>Phyllobacteriaceae</taxon>
        <taxon>Mesorhizobium</taxon>
    </lineage>
</organism>
<protein>
    <recommendedName>
        <fullName evidence="1">3-dehydroquinate dehydratase</fullName>
        <shortName evidence="1">3-dehydroquinase</shortName>
        <ecNumber evidence="1">4.2.1.10</ecNumber>
    </recommendedName>
    <alternativeName>
        <fullName evidence="1">Type II DHQase</fullName>
    </alternativeName>
</protein>
<gene>
    <name evidence="1" type="primary">aroQ</name>
    <name type="ordered locus">mll0207</name>
</gene>
<name>AROQ_RHILO</name>
<accession>Q98NC1</accession>
<comment type="function">
    <text evidence="1">Catalyzes a trans-dehydration via an enolate intermediate.</text>
</comment>
<comment type="catalytic activity">
    <reaction evidence="1">
        <text>3-dehydroquinate = 3-dehydroshikimate + H2O</text>
        <dbReference type="Rhea" id="RHEA:21096"/>
        <dbReference type="ChEBI" id="CHEBI:15377"/>
        <dbReference type="ChEBI" id="CHEBI:16630"/>
        <dbReference type="ChEBI" id="CHEBI:32364"/>
        <dbReference type="EC" id="4.2.1.10"/>
    </reaction>
</comment>
<comment type="pathway">
    <text evidence="1">Metabolic intermediate biosynthesis; chorismate biosynthesis; chorismate from D-erythrose 4-phosphate and phosphoenolpyruvate: step 3/7.</text>
</comment>
<comment type="subunit">
    <text evidence="1">Homododecamer.</text>
</comment>
<comment type="similarity">
    <text evidence="1">Belongs to the type-II 3-dehydroquinase family.</text>
</comment>
<keyword id="KW-0028">Amino-acid biosynthesis</keyword>
<keyword id="KW-0057">Aromatic amino acid biosynthesis</keyword>
<keyword id="KW-0456">Lyase</keyword>
<evidence type="ECO:0000255" key="1">
    <source>
        <dbReference type="HAMAP-Rule" id="MF_00169"/>
    </source>
</evidence>
<proteinExistence type="inferred from homology"/>
<feature type="chain" id="PRO_0000159925" description="3-dehydroquinate dehydratase">
    <location>
        <begin position="1"/>
        <end position="144"/>
    </location>
</feature>
<feature type="active site" description="Proton acceptor" evidence="1">
    <location>
        <position position="23"/>
    </location>
</feature>
<feature type="active site" description="Proton donor" evidence="1">
    <location>
        <position position="101"/>
    </location>
</feature>
<feature type="binding site" evidence="1">
    <location>
        <position position="74"/>
    </location>
    <ligand>
        <name>substrate</name>
    </ligand>
</feature>
<feature type="binding site" evidence="1">
    <location>
        <position position="80"/>
    </location>
    <ligand>
        <name>substrate</name>
    </ligand>
</feature>
<feature type="binding site" evidence="1">
    <location>
        <position position="87"/>
    </location>
    <ligand>
        <name>substrate</name>
    </ligand>
</feature>
<feature type="binding site" evidence="1">
    <location>
        <begin position="102"/>
        <end position="103"/>
    </location>
    <ligand>
        <name>substrate</name>
    </ligand>
</feature>
<feature type="binding site" evidence="1">
    <location>
        <position position="112"/>
    </location>
    <ligand>
        <name>substrate</name>
    </ligand>
</feature>
<feature type="site" description="Transition state stabilizer" evidence="1">
    <location>
        <position position="18"/>
    </location>
</feature>
<reference key="1">
    <citation type="journal article" date="2000" name="DNA Res.">
        <title>Complete genome structure of the nitrogen-fixing symbiotic bacterium Mesorhizobium loti.</title>
        <authorList>
            <person name="Kaneko T."/>
            <person name="Nakamura Y."/>
            <person name="Sato S."/>
            <person name="Asamizu E."/>
            <person name="Kato T."/>
            <person name="Sasamoto S."/>
            <person name="Watanabe A."/>
            <person name="Idesawa K."/>
            <person name="Ishikawa A."/>
            <person name="Kawashima K."/>
            <person name="Kimura T."/>
            <person name="Kishida Y."/>
            <person name="Kiyokawa C."/>
            <person name="Kohara M."/>
            <person name="Matsumoto M."/>
            <person name="Matsuno A."/>
            <person name="Mochizuki Y."/>
            <person name="Nakayama S."/>
            <person name="Nakazaki N."/>
            <person name="Shimpo S."/>
            <person name="Sugimoto M."/>
            <person name="Takeuchi C."/>
            <person name="Yamada M."/>
            <person name="Tabata S."/>
        </authorList>
    </citation>
    <scope>NUCLEOTIDE SEQUENCE [LARGE SCALE GENOMIC DNA]</scope>
    <source>
        <strain>LMG 29417 / CECT 9101 / MAFF 303099</strain>
    </source>
</reference>